<reference key="1">
    <citation type="journal article" date="1993" name="Mol. Cell. Biol.">
        <title>A multicopy suppressor gene of the Saccharomyces cerevisiae G1 cell cycle mutant gene dbf4 encodes a protein kinase and is identified as CDC5.</title>
        <authorList>
            <person name="Kitada K."/>
            <person name="Sugino A."/>
            <person name="Johnston L.H."/>
            <person name="Johnson A.L."/>
        </authorList>
    </citation>
    <scope>NUCLEOTIDE SEQUENCE</scope>
    <source>
        <strain>ATCC 204626 / S288c / A364A</strain>
    </source>
</reference>
<reference key="2">
    <citation type="journal article" date="1997" name="Nature">
        <title>The nucleotide sequence of Saccharomyces cerevisiae chromosome XIII.</title>
        <authorList>
            <person name="Bowman S."/>
            <person name="Churcher C.M."/>
            <person name="Badcock K."/>
            <person name="Brown D."/>
            <person name="Chillingworth T."/>
            <person name="Connor R."/>
            <person name="Dedman K."/>
            <person name="Devlin K."/>
            <person name="Gentles S."/>
            <person name="Hamlin N."/>
            <person name="Hunt S."/>
            <person name="Jagels K."/>
            <person name="Lye G."/>
            <person name="Moule S."/>
            <person name="Odell C."/>
            <person name="Pearson D."/>
            <person name="Rajandream M.A."/>
            <person name="Rice P."/>
            <person name="Skelton J."/>
            <person name="Walsh S.V."/>
            <person name="Whitehead S."/>
            <person name="Barrell B.G."/>
        </authorList>
    </citation>
    <scope>NUCLEOTIDE SEQUENCE [LARGE SCALE GENOMIC DNA]</scope>
    <source>
        <strain>ATCC 204508 / S288c</strain>
    </source>
</reference>
<reference key="3">
    <citation type="journal article" date="2014" name="G3 (Bethesda)">
        <title>The reference genome sequence of Saccharomyces cerevisiae: Then and now.</title>
        <authorList>
            <person name="Engel S.R."/>
            <person name="Dietrich F.S."/>
            <person name="Fisk D.G."/>
            <person name="Binkley G."/>
            <person name="Balakrishnan R."/>
            <person name="Costanzo M.C."/>
            <person name="Dwight S.S."/>
            <person name="Hitz B.C."/>
            <person name="Karra K."/>
            <person name="Nash R.S."/>
            <person name="Weng S."/>
            <person name="Wong E.D."/>
            <person name="Lloyd P."/>
            <person name="Skrzypek M.S."/>
            <person name="Miyasato S.R."/>
            <person name="Simison M."/>
            <person name="Cherry J.M."/>
        </authorList>
    </citation>
    <scope>GENOME REANNOTATION</scope>
    <source>
        <strain>ATCC 204508 / S288c</strain>
    </source>
</reference>
<reference key="4">
    <citation type="journal article" date="2001" name="Cell">
        <title>Phosphorylation of the cohesin subunit Scc1 by Polo/Cdc5 kinase regulates sister chromatid separation in yeast.</title>
        <authorList>
            <person name="Alexandru G."/>
            <person name="Uhlmann F."/>
            <person name="Mechtler K."/>
            <person name="Poupart M.-A."/>
            <person name="Nasmyth K."/>
        </authorList>
    </citation>
    <scope>FUNCTION IN PHOSPHORYLATION OF SCC1</scope>
    <scope>CATALYTIC ACTIVITY</scope>
</reference>
<reference key="5">
    <citation type="journal article" date="2002" name="Biochem. Biophys. Res. Commun.">
        <title>Budding yeast Cdc5 phosphorylates Net1 and assists Cdc14 release from the nucleolus.</title>
        <authorList>
            <person name="Yoshida S."/>
            <person name="Toh-e A."/>
        </authorList>
    </citation>
    <scope>FUNCTION IN PHOSPHORYLATION OF NET1</scope>
    <scope>CATALYTIC ACTIVITY</scope>
</reference>
<reference key="6">
    <citation type="journal article" date="2002" name="Cell">
        <title>Separase, polo kinase, the kinetochore protein Slk19, and Spo12 function in a network that controls Cdc14 localization during early anaphase.</title>
        <authorList>
            <person name="Stegmeier F."/>
            <person name="Visintin R."/>
            <person name="Amon A."/>
        </authorList>
    </citation>
    <scope>FUNCTION AS A COMPONENT OF THE FEAR NETWORK</scope>
</reference>
<reference key="7">
    <citation type="journal article" date="2003" name="Cell">
        <title>The AAA-ATPase Cdc48/p97 regulates spindle disassembly at the end of mitosis.</title>
        <authorList>
            <person name="Cao K."/>
            <person name="Nakajima R."/>
            <person name="Meyer H.H."/>
            <person name="Zheng Y."/>
        </authorList>
    </citation>
    <scope>INTERACTION WITH CDC48</scope>
</reference>
<reference key="8">
    <citation type="journal article" date="2003" name="Nature">
        <title>Global analysis of protein expression in yeast.</title>
        <authorList>
            <person name="Ghaemmaghami S."/>
            <person name="Huh W.-K."/>
            <person name="Bower K."/>
            <person name="Howson R.W."/>
            <person name="Belle A."/>
            <person name="Dephoure N."/>
            <person name="O'Shea E.K."/>
            <person name="Weissman J.S."/>
        </authorList>
    </citation>
    <scope>LEVEL OF PROTEIN EXPRESSION [LARGE SCALE ANALYSIS]</scope>
</reference>
<reference key="9">
    <citation type="journal article" date="2007" name="Proc. Natl. Acad. Sci. U.S.A.">
        <title>Analysis of phosphorylation sites on proteins from Saccharomyces cerevisiae by electron transfer dissociation (ETD) mass spectrometry.</title>
        <authorList>
            <person name="Chi A."/>
            <person name="Huttenhower C."/>
            <person name="Geer L.Y."/>
            <person name="Coon J.J."/>
            <person name="Syka J.E.P."/>
            <person name="Bai D.L."/>
            <person name="Shabanowitz J."/>
            <person name="Burke D.J."/>
            <person name="Troyanskaya O.G."/>
            <person name="Hunt D.F."/>
        </authorList>
    </citation>
    <scope>PHOSPHORYLATION [LARGE SCALE ANALYSIS] AT SER-419</scope>
    <scope>IDENTIFICATION BY MASS SPECTROMETRY [LARGE SCALE ANALYSIS]</scope>
</reference>
<reference key="10">
    <citation type="journal article" date="2008" name="Mol. Cell. Proteomics">
        <title>A multidimensional chromatography technology for in-depth phosphoproteome analysis.</title>
        <authorList>
            <person name="Albuquerque C.P."/>
            <person name="Smolka M.B."/>
            <person name="Payne S.H."/>
            <person name="Bafna V."/>
            <person name="Eng J."/>
            <person name="Zhou H."/>
        </authorList>
    </citation>
    <scope>IDENTIFICATION BY MASS SPECTROMETRY [LARGE SCALE ANALYSIS]</scope>
</reference>
<reference key="11">
    <citation type="journal article" date="2009" name="Science">
        <title>Global analysis of Cdk1 substrate phosphorylation sites provides insights into evolution.</title>
        <authorList>
            <person name="Holt L.J."/>
            <person name="Tuch B.B."/>
            <person name="Villen J."/>
            <person name="Johnson A.D."/>
            <person name="Gygi S.P."/>
            <person name="Morgan D.O."/>
        </authorList>
    </citation>
    <scope>PHOSPHORYLATION [LARGE SCALE ANALYSIS] AT THR-23</scope>
    <scope>IDENTIFICATION BY MASS SPECTROMETRY [LARGE SCALE ANALYSIS]</scope>
</reference>
<reference key="12">
    <citation type="journal article" date="2020" name="Cell Rep.">
        <title>Proline-Rich Motifs Control G2-CDK Target Phosphorylation and Priming an Anchoring Protein for Polo Kinase Localization.</title>
        <authorList>
            <person name="Oerd M."/>
            <person name="Puss K.K."/>
            <person name="Kivi R."/>
            <person name="Moell K."/>
            <person name="Ojala T."/>
            <person name="Borovko I."/>
            <person name="Faustova I."/>
            <person name="Venta R."/>
            <person name="Valk E."/>
            <person name="Koivomaegi M."/>
            <person name="Loog M."/>
        </authorList>
    </citation>
    <scope>SUBCELLULAR LOCATION</scope>
    <scope>INTERACTION WITH CSA1</scope>
</reference>
<reference evidence="12 13 14" key="13">
    <citation type="journal article" date="2020" name="Sci. Rep.">
        <title>Distinct surfaces on Cdc5/PLK Polo-box domain orchestrate combinatorial substrate recognition during cell division.</title>
        <authorList>
            <person name="Almawi A.W."/>
            <person name="Langlois-Lemay L."/>
            <person name="Boulton S."/>
            <person name="Rodriguez Gonzalez J."/>
            <person name="Melacini G."/>
            <person name="D'Amours D."/>
            <person name="Guarne A."/>
        </authorList>
    </citation>
    <scope>X-RAY CRYSTALLOGRAPHY (1.80 ANGSTROMS) OF 418-705 IN COMPLEX WITH ZN(2+)</scope>
    <scope>FUNCTION</scope>
    <scope>MUTAGENESIS OF SER-630</scope>
</reference>
<organism>
    <name type="scientific">Saccharomyces cerevisiae (strain ATCC 204508 / S288c)</name>
    <name type="common">Baker's yeast</name>
    <dbReference type="NCBI Taxonomy" id="559292"/>
    <lineage>
        <taxon>Eukaryota</taxon>
        <taxon>Fungi</taxon>
        <taxon>Dikarya</taxon>
        <taxon>Ascomycota</taxon>
        <taxon>Saccharomycotina</taxon>
        <taxon>Saccharomycetes</taxon>
        <taxon>Saccharomycetales</taxon>
        <taxon>Saccharomycetaceae</taxon>
        <taxon>Saccharomyces</taxon>
    </lineage>
</organism>
<sequence length="705" mass="81031">MSLGPLKAINDKQLNTRSKLVHTPIKGNTADLVGKENHFKQTKRLDPNNDHHHQPAQKKKREKLSALCKTPPSLIKTRGKDYHRGHFLGEGGFARCFQIKDDSGEIFAAKTVAKASIKSEKTRKKLLSEIQIHKSMSHPNIVQFIDCFEDDSNVYILLEICPNGSLMELLKRRKVLTEPEVRFFTTQICGAIKYMHSRRVIHRDLKLGNIFFDSNYNLKIGDFGLAAVLANESERKYTICGTPNYIAPEVLMGKHSGHSFEVDIWSLGVMLYALLIGKPPFQARDVNTIYERIKCRDFSFPRDKPISDEGKILIRDILSLDPIERPSLTEIMDYVWFRGTFPPSIPSTVMSEAPNFEDIPEEQSLVNFKDCMEKSLLLESMSSDKIQRQKRDYISSIKSSIDKLEEYHQNRPFLPHSLSPGGTKQKYKEVVDIEAQRRLNDLAREARIRRAQQAVLRKELIATSTNVIKSEISLRILASECHLTLNGIVEAEAQYKMGGLPKSRLPKIKHPMIVTKWVDYSNKHGFSYQLSTEDIGVLFNNGTTVLRLADAEEFWYISYDDREGWVASHYLLSEKPRELSRHLEVVDFFAKYMKANLSRVSTFGREEYHKDDVFLRRYTRYKPFVMFELSDGTFQFNFKDHHKMAISDGGKLVTYISPSHESTTYPLVEVLKYGEIPGYPESNFREKLTLIKEGLKQKSTIVTVD</sequence>
<name>CDC5_YEAST</name>
<accession>P32562</accession>
<accession>D6VZH5</accession>
<proteinExistence type="evidence at protein level"/>
<feature type="chain" id="PRO_0000085762" description="Cell cycle serine/threonine-protein kinase CDC5/MSD2">
    <location>
        <begin position="1"/>
        <end position="705"/>
    </location>
</feature>
<feature type="domain" description="Protein kinase" evidence="2">
    <location>
        <begin position="82"/>
        <end position="337"/>
    </location>
</feature>
<feature type="domain" description="POLO box 1" evidence="1">
    <location>
        <begin position="513"/>
        <end position="595"/>
    </location>
</feature>
<feature type="domain" description="POLO box 2" evidence="1">
    <location>
        <begin position="614"/>
        <end position="700"/>
    </location>
</feature>
<feature type="region of interest" description="Disordered" evidence="4">
    <location>
        <begin position="41"/>
        <end position="63"/>
    </location>
</feature>
<feature type="compositionally biased region" description="Basic and acidic residues" evidence="4">
    <location>
        <begin position="41"/>
        <end position="53"/>
    </location>
</feature>
<feature type="active site" description="Proton acceptor" evidence="2 3">
    <location>
        <position position="204"/>
    </location>
</feature>
<feature type="binding site" evidence="2">
    <location>
        <begin position="88"/>
        <end position="96"/>
    </location>
    <ligand>
        <name>ATP</name>
        <dbReference type="ChEBI" id="CHEBI:30616"/>
    </ligand>
</feature>
<feature type="binding site" evidence="2">
    <location>
        <position position="110"/>
    </location>
    <ligand>
        <name>ATP</name>
        <dbReference type="ChEBI" id="CHEBI:30616"/>
    </ligand>
</feature>
<feature type="binding site" evidence="12">
    <location>
        <position position="553"/>
    </location>
    <ligand>
        <name>Zn(2+)</name>
        <dbReference type="ChEBI" id="CHEBI:29105"/>
    </ligand>
</feature>
<feature type="binding site" evidence="12">
    <location>
        <position position="569"/>
    </location>
    <ligand>
        <name>Zn(2+)</name>
        <dbReference type="ChEBI" id="CHEBI:29105"/>
    </ligand>
</feature>
<feature type="binding site" evidence="12">
    <location>
        <position position="609"/>
    </location>
    <ligand>
        <name>Zn(2+)</name>
        <dbReference type="ChEBI" id="CHEBI:29105"/>
    </ligand>
</feature>
<feature type="binding site" evidence="12">
    <location>
        <position position="612"/>
    </location>
    <ligand>
        <name>Zn(2+)</name>
        <dbReference type="ChEBI" id="CHEBI:29105"/>
    </ligand>
</feature>
<feature type="modified residue" description="Phosphothreonine" evidence="16">
    <location>
        <position position="23"/>
    </location>
</feature>
<feature type="modified residue" description="Phosphoserine" evidence="15">
    <location>
        <position position="419"/>
    </location>
</feature>
<feature type="mutagenesis site" description="Fails to complete the segregation of its chromosomes and arrests in anaphase." evidence="10">
    <original>S</original>
    <variation>Q</variation>
    <location>
        <position position="630"/>
    </location>
</feature>
<feature type="helix" evidence="18">
    <location>
        <begin position="437"/>
        <end position="450"/>
    </location>
</feature>
<feature type="strand" evidence="17">
    <location>
        <begin position="463"/>
        <end position="465"/>
    </location>
</feature>
<feature type="helix" evidence="17">
    <location>
        <begin position="471"/>
        <end position="497"/>
    </location>
</feature>
<feature type="strand" evidence="19">
    <location>
        <begin position="502"/>
        <end position="504"/>
    </location>
</feature>
<feature type="strand" evidence="17">
    <location>
        <begin position="514"/>
        <end position="518"/>
    </location>
</feature>
<feature type="strand" evidence="17">
    <location>
        <begin position="521"/>
        <end position="530"/>
    </location>
</feature>
<feature type="strand" evidence="17">
    <location>
        <begin position="535"/>
        <end position="538"/>
    </location>
</feature>
<feature type="strand" evidence="17">
    <location>
        <begin position="544"/>
        <end position="547"/>
    </location>
</feature>
<feature type="strand" evidence="17">
    <location>
        <begin position="551"/>
        <end position="560"/>
    </location>
</feature>
<feature type="turn" evidence="17">
    <location>
        <begin position="561"/>
        <end position="563"/>
    </location>
</feature>
<feature type="strand" evidence="17">
    <location>
        <begin position="564"/>
        <end position="571"/>
    </location>
</feature>
<feature type="helix" evidence="17">
    <location>
        <begin position="572"/>
        <end position="574"/>
    </location>
</feature>
<feature type="helix" evidence="17">
    <location>
        <begin position="577"/>
        <end position="579"/>
    </location>
</feature>
<feature type="helix" evidence="17">
    <location>
        <begin position="580"/>
        <end position="593"/>
    </location>
</feature>
<feature type="turn" evidence="17">
    <location>
        <begin position="607"/>
        <end position="611"/>
    </location>
</feature>
<feature type="strand" evidence="17">
    <location>
        <begin position="615"/>
        <end position="620"/>
    </location>
</feature>
<feature type="strand" evidence="17">
    <location>
        <begin position="622"/>
        <end position="629"/>
    </location>
</feature>
<feature type="strand" evidence="17">
    <location>
        <begin position="634"/>
        <end position="638"/>
    </location>
</feature>
<feature type="strand" evidence="17">
    <location>
        <begin position="643"/>
        <end position="647"/>
    </location>
</feature>
<feature type="turn" evidence="17">
    <location>
        <begin position="648"/>
        <end position="651"/>
    </location>
</feature>
<feature type="strand" evidence="17">
    <location>
        <begin position="652"/>
        <end position="656"/>
    </location>
</feature>
<feature type="strand" evidence="17">
    <location>
        <begin position="662"/>
        <end position="666"/>
    </location>
</feature>
<feature type="helix" evidence="17">
    <location>
        <begin position="667"/>
        <end position="673"/>
    </location>
</feature>
<feature type="helix" evidence="17">
    <location>
        <begin position="680"/>
        <end position="682"/>
    </location>
</feature>
<feature type="helix" evidence="17">
    <location>
        <begin position="684"/>
        <end position="698"/>
    </location>
</feature>
<keyword id="KW-0002">3D-structure</keyword>
<keyword id="KW-0067">ATP-binding</keyword>
<keyword id="KW-0131">Cell cycle</keyword>
<keyword id="KW-0132">Cell division</keyword>
<keyword id="KW-0963">Cytoplasm</keyword>
<keyword id="KW-0206">Cytoskeleton</keyword>
<keyword id="KW-0418">Kinase</keyword>
<keyword id="KW-0498">Mitosis</keyword>
<keyword id="KW-0547">Nucleotide-binding</keyword>
<keyword id="KW-0597">Phosphoprotein</keyword>
<keyword id="KW-1185">Reference proteome</keyword>
<keyword id="KW-0677">Repeat</keyword>
<keyword id="KW-0723">Serine/threonine-protein kinase</keyword>
<keyword id="KW-0808">Transferase</keyword>
<evidence type="ECO:0000255" key="1">
    <source>
        <dbReference type="PROSITE-ProRule" id="PRU00154"/>
    </source>
</evidence>
<evidence type="ECO:0000255" key="2">
    <source>
        <dbReference type="PROSITE-ProRule" id="PRU00159"/>
    </source>
</evidence>
<evidence type="ECO:0000255" key="3">
    <source>
        <dbReference type="PROSITE-ProRule" id="PRU10027"/>
    </source>
</evidence>
<evidence type="ECO:0000256" key="4">
    <source>
        <dbReference type="SAM" id="MobiDB-lite"/>
    </source>
</evidence>
<evidence type="ECO:0000269" key="5">
    <source>
    </source>
</evidence>
<evidence type="ECO:0000269" key="6">
    <source>
    </source>
</evidence>
<evidence type="ECO:0000269" key="7">
    <source>
    </source>
</evidence>
<evidence type="ECO:0000269" key="8">
    <source>
    </source>
</evidence>
<evidence type="ECO:0000269" key="9">
    <source>
    </source>
</evidence>
<evidence type="ECO:0000269" key="10">
    <source>
    </source>
</evidence>
<evidence type="ECO:0000269" key="11">
    <source>
    </source>
</evidence>
<evidence type="ECO:0007744" key="12">
    <source>
        <dbReference type="PDB" id="6MF4"/>
    </source>
</evidence>
<evidence type="ECO:0007744" key="13">
    <source>
        <dbReference type="PDB" id="6MF5"/>
    </source>
</evidence>
<evidence type="ECO:0007744" key="14">
    <source>
        <dbReference type="PDB" id="6MF6"/>
    </source>
</evidence>
<evidence type="ECO:0007744" key="15">
    <source>
    </source>
</evidence>
<evidence type="ECO:0007744" key="16">
    <source>
    </source>
</evidence>
<evidence type="ECO:0007829" key="17">
    <source>
        <dbReference type="PDB" id="6MF4"/>
    </source>
</evidence>
<evidence type="ECO:0007829" key="18">
    <source>
        <dbReference type="PDB" id="6MF5"/>
    </source>
</evidence>
<evidence type="ECO:0007829" key="19">
    <source>
        <dbReference type="PDB" id="6MF6"/>
    </source>
</evidence>
<dbReference type="EC" id="2.7.11.21" evidence="5 7"/>
<dbReference type="EMBL" id="M84220">
    <property type="protein sequence ID" value="AAA02576.1"/>
    <property type="molecule type" value="Unassigned_DNA"/>
</dbReference>
<dbReference type="EMBL" id="Z48613">
    <property type="protein sequence ID" value="CAA88516.1"/>
    <property type="molecule type" value="Genomic_DNA"/>
</dbReference>
<dbReference type="EMBL" id="BK006946">
    <property type="protein sequence ID" value="DAA09899.1"/>
    <property type="molecule type" value="Genomic_DNA"/>
</dbReference>
<dbReference type="PIR" id="A48144">
    <property type="entry name" value="A48144"/>
</dbReference>
<dbReference type="RefSeq" id="NP_013714.1">
    <property type="nucleotide sequence ID" value="NM_001182497.1"/>
</dbReference>
<dbReference type="PDB" id="6MF4">
    <property type="method" value="X-ray"/>
    <property type="resolution" value="1.80 A"/>
    <property type="chains" value="A=418-705"/>
</dbReference>
<dbReference type="PDB" id="6MF5">
    <property type="method" value="X-ray"/>
    <property type="resolution" value="2.70 A"/>
    <property type="chains" value="A/B=418-705"/>
</dbReference>
<dbReference type="PDB" id="6MF6">
    <property type="method" value="X-ray"/>
    <property type="resolution" value="3.40 A"/>
    <property type="chains" value="A/B=418-705"/>
</dbReference>
<dbReference type="PDBsum" id="6MF4"/>
<dbReference type="PDBsum" id="6MF5"/>
<dbReference type="PDBsum" id="6MF6"/>
<dbReference type="SMR" id="P32562"/>
<dbReference type="BioGRID" id="35171">
    <property type="interactions" value="230"/>
</dbReference>
<dbReference type="DIP" id="DIP-2321N"/>
<dbReference type="FunCoup" id="P32562">
    <property type="interactions" value="544"/>
</dbReference>
<dbReference type="IntAct" id="P32562">
    <property type="interactions" value="65"/>
</dbReference>
<dbReference type="MINT" id="P32562"/>
<dbReference type="STRING" id="4932.YMR001C"/>
<dbReference type="iPTMnet" id="P32562"/>
<dbReference type="PaxDb" id="4932-YMR001C"/>
<dbReference type="PeptideAtlas" id="P32562"/>
<dbReference type="EnsemblFungi" id="YMR001C_mRNA">
    <property type="protein sequence ID" value="YMR001C"/>
    <property type="gene ID" value="YMR001C"/>
</dbReference>
<dbReference type="GeneID" id="855013"/>
<dbReference type="KEGG" id="sce:YMR001C"/>
<dbReference type="AGR" id="SGD:S000004603"/>
<dbReference type="SGD" id="S000004603">
    <property type="gene designation" value="CDC5"/>
</dbReference>
<dbReference type="VEuPathDB" id="FungiDB:YMR001C"/>
<dbReference type="eggNOG" id="KOG0575">
    <property type="taxonomic scope" value="Eukaryota"/>
</dbReference>
<dbReference type="GeneTree" id="ENSGT00940000157752"/>
<dbReference type="HOGENOM" id="CLU_000288_46_2_1"/>
<dbReference type="InParanoid" id="P32562"/>
<dbReference type="OMA" id="IQIHKSM"/>
<dbReference type="OrthoDB" id="408964at2759"/>
<dbReference type="BioCyc" id="YEAST:G3O-32712-MONOMER"/>
<dbReference type="BRENDA" id="2.7.11.21">
    <property type="organism ID" value="984"/>
</dbReference>
<dbReference type="Reactome" id="R-SCE-156711">
    <property type="pathway name" value="Polo-like kinase mediated events"/>
</dbReference>
<dbReference type="Reactome" id="R-SCE-162658">
    <property type="pathway name" value="Golgi Cisternae Pericentriolar Stack Reorganization"/>
</dbReference>
<dbReference type="Reactome" id="R-SCE-2500257">
    <property type="pathway name" value="Resolution of Sister Chromatid Cohesion"/>
</dbReference>
<dbReference type="Reactome" id="R-SCE-2565942">
    <property type="pathway name" value="Regulation of PLK1 Activity at G2/M Transition"/>
</dbReference>
<dbReference type="Reactome" id="R-SCE-6804115">
    <property type="pathway name" value="TP53 regulates transcription of additional cell cycle genes whose exact role in the p53 pathway remain uncertain"/>
</dbReference>
<dbReference type="BioGRID-ORCS" id="855013">
    <property type="hits" value="2 hits in 13 CRISPR screens"/>
</dbReference>
<dbReference type="CD-CODE" id="876000F7">
    <property type="entry name" value="Centrosome"/>
</dbReference>
<dbReference type="PRO" id="PR:P32562"/>
<dbReference type="Proteomes" id="UP000002311">
    <property type="component" value="Chromosome XIII"/>
</dbReference>
<dbReference type="RNAct" id="P32562">
    <property type="molecule type" value="protein"/>
</dbReference>
<dbReference type="GO" id="GO:0005935">
    <property type="term" value="C:cellular bud neck"/>
    <property type="evidence" value="ECO:0000314"/>
    <property type="project" value="SGD"/>
</dbReference>
<dbReference type="GO" id="GO:0005737">
    <property type="term" value="C:cytoplasm"/>
    <property type="evidence" value="ECO:0000318"/>
    <property type="project" value="GO_Central"/>
</dbReference>
<dbReference type="GO" id="GO:0000776">
    <property type="term" value="C:kinetochore"/>
    <property type="evidence" value="ECO:0000318"/>
    <property type="project" value="GO_Central"/>
</dbReference>
<dbReference type="GO" id="GO:0044732">
    <property type="term" value="C:mitotic spindle pole body"/>
    <property type="evidence" value="ECO:0000314"/>
    <property type="project" value="SGD"/>
</dbReference>
<dbReference type="GO" id="GO:0005634">
    <property type="term" value="C:nucleus"/>
    <property type="evidence" value="ECO:0000314"/>
    <property type="project" value="SGD"/>
</dbReference>
<dbReference type="GO" id="GO:0000922">
    <property type="term" value="C:spindle pole"/>
    <property type="evidence" value="ECO:0000314"/>
    <property type="project" value="SGD"/>
</dbReference>
<dbReference type="GO" id="GO:0005816">
    <property type="term" value="C:spindle pole body"/>
    <property type="evidence" value="ECO:0000318"/>
    <property type="project" value="GO_Central"/>
</dbReference>
<dbReference type="GO" id="GO:0005524">
    <property type="term" value="F:ATP binding"/>
    <property type="evidence" value="ECO:0007669"/>
    <property type="project" value="UniProtKB-KW"/>
</dbReference>
<dbReference type="GO" id="GO:0019237">
    <property type="term" value="F:centromeric DNA binding"/>
    <property type="evidence" value="ECO:0000314"/>
    <property type="project" value="SGD"/>
</dbReference>
<dbReference type="GO" id="GO:0051219">
    <property type="term" value="F:phosphoprotein binding"/>
    <property type="evidence" value="ECO:0000314"/>
    <property type="project" value="SGD"/>
</dbReference>
<dbReference type="GO" id="GO:0004672">
    <property type="term" value="F:protein kinase activity"/>
    <property type="evidence" value="ECO:0000314"/>
    <property type="project" value="SGD"/>
</dbReference>
<dbReference type="GO" id="GO:0106310">
    <property type="term" value="F:protein serine kinase activity"/>
    <property type="evidence" value="ECO:0007669"/>
    <property type="project" value="RHEA"/>
</dbReference>
<dbReference type="GO" id="GO:0004674">
    <property type="term" value="F:protein serine/threonine kinase activity"/>
    <property type="evidence" value="ECO:0000314"/>
    <property type="project" value="SGD"/>
</dbReference>
<dbReference type="GO" id="GO:0051301">
    <property type="term" value="P:cell division"/>
    <property type="evidence" value="ECO:0007669"/>
    <property type="project" value="UniProtKB-KW"/>
</dbReference>
<dbReference type="GO" id="GO:0010458">
    <property type="term" value="P:exit from mitosis"/>
    <property type="evidence" value="ECO:0000316"/>
    <property type="project" value="SGD"/>
</dbReference>
<dbReference type="GO" id="GO:0000086">
    <property type="term" value="P:G2/M transition of mitotic cell cycle"/>
    <property type="evidence" value="ECO:0000353"/>
    <property type="project" value="SGD"/>
</dbReference>
<dbReference type="GO" id="GO:0090306">
    <property type="term" value="P:meiotic spindle assembly"/>
    <property type="evidence" value="ECO:0000315"/>
    <property type="project" value="SGD"/>
</dbReference>
<dbReference type="GO" id="GO:0007052">
    <property type="term" value="P:mitotic spindle organization"/>
    <property type="evidence" value="ECO:0000318"/>
    <property type="project" value="GO_Central"/>
</dbReference>
<dbReference type="GO" id="GO:1904750">
    <property type="term" value="P:negative regulation of protein localization to nucleolus"/>
    <property type="evidence" value="ECO:0000315"/>
    <property type="project" value="SGD"/>
</dbReference>
<dbReference type="GO" id="GO:0010696">
    <property type="term" value="P:positive regulation of mitotic spindle pole body separation"/>
    <property type="evidence" value="ECO:0000315"/>
    <property type="project" value="SGD"/>
</dbReference>
<dbReference type="GO" id="GO:0110083">
    <property type="term" value="P:positive regulation of protein localization to cell division site involved in mitotic actomyosin contractile ring assembly"/>
    <property type="evidence" value="ECO:0000315"/>
    <property type="project" value="SGD"/>
</dbReference>
<dbReference type="GO" id="GO:0035025">
    <property type="term" value="P:positive regulation of Rho protein signal transduction"/>
    <property type="evidence" value="ECO:0000315"/>
    <property type="project" value="SGD"/>
</dbReference>
<dbReference type="GO" id="GO:1903353">
    <property type="term" value="P:regulation of nucleus organization"/>
    <property type="evidence" value="ECO:0000315"/>
    <property type="project" value="SGD"/>
</dbReference>
<dbReference type="GO" id="GO:1902542">
    <property type="term" value="P:regulation of protein localization to mitotic spindle pole body"/>
    <property type="evidence" value="ECO:0000316"/>
    <property type="project" value="SGD"/>
</dbReference>
<dbReference type="GO" id="GO:1904749">
    <property type="term" value="P:regulation of protein localization to nucleolus"/>
    <property type="evidence" value="ECO:0000315"/>
    <property type="project" value="SGD"/>
</dbReference>
<dbReference type="GO" id="GO:0000712">
    <property type="term" value="P:resolution of meiotic recombination intermediates"/>
    <property type="evidence" value="ECO:0000315"/>
    <property type="project" value="SGD"/>
</dbReference>
<dbReference type="GO" id="GO:0070194">
    <property type="term" value="P:synaptonemal complex disassembly"/>
    <property type="evidence" value="ECO:0000316"/>
    <property type="project" value="SGD"/>
</dbReference>
<dbReference type="CDD" id="cd13118">
    <property type="entry name" value="POLO_box_1"/>
    <property type="match status" value="1"/>
</dbReference>
<dbReference type="CDD" id="cd13117">
    <property type="entry name" value="POLO_box_2"/>
    <property type="match status" value="1"/>
</dbReference>
<dbReference type="CDD" id="cd14099">
    <property type="entry name" value="STKc_PLK"/>
    <property type="match status" value="1"/>
</dbReference>
<dbReference type="FunFam" id="1.10.510.10:FF:000647">
    <property type="entry name" value="Serine/threonine-protein kinase"/>
    <property type="match status" value="1"/>
</dbReference>
<dbReference type="FunFam" id="3.30.1120.30:FF:000005">
    <property type="entry name" value="Serine/threonine-protein kinase"/>
    <property type="match status" value="1"/>
</dbReference>
<dbReference type="FunFam" id="3.30.200.20:FF:000091">
    <property type="entry name" value="Serine/threonine-protein kinase PLK"/>
    <property type="match status" value="1"/>
</dbReference>
<dbReference type="Gene3D" id="3.30.200.20">
    <property type="entry name" value="Phosphorylase Kinase, domain 1"/>
    <property type="match status" value="1"/>
</dbReference>
<dbReference type="Gene3D" id="3.30.1120.30">
    <property type="entry name" value="POLO box domain"/>
    <property type="match status" value="2"/>
</dbReference>
<dbReference type="Gene3D" id="1.10.510.10">
    <property type="entry name" value="Transferase(Phosphotransferase) domain 1"/>
    <property type="match status" value="1"/>
</dbReference>
<dbReference type="InterPro" id="IPR011009">
    <property type="entry name" value="Kinase-like_dom_sf"/>
</dbReference>
<dbReference type="InterPro" id="IPR033701">
    <property type="entry name" value="POLO_box_1"/>
</dbReference>
<dbReference type="InterPro" id="IPR033695">
    <property type="entry name" value="POLO_box_2"/>
</dbReference>
<dbReference type="InterPro" id="IPR000959">
    <property type="entry name" value="POLO_box_dom"/>
</dbReference>
<dbReference type="InterPro" id="IPR036947">
    <property type="entry name" value="POLO_box_dom_sf"/>
</dbReference>
<dbReference type="InterPro" id="IPR000719">
    <property type="entry name" value="Prot_kinase_dom"/>
</dbReference>
<dbReference type="InterPro" id="IPR017441">
    <property type="entry name" value="Protein_kinase_ATP_BS"/>
</dbReference>
<dbReference type="InterPro" id="IPR008271">
    <property type="entry name" value="Ser/Thr_kinase_AS"/>
</dbReference>
<dbReference type="PANTHER" id="PTHR24345:SF0">
    <property type="entry name" value="CELL CYCLE SERINE_THREONINE-PROTEIN KINASE CDC5_MSD2"/>
    <property type="match status" value="1"/>
</dbReference>
<dbReference type="PANTHER" id="PTHR24345">
    <property type="entry name" value="SERINE/THREONINE-PROTEIN KINASE PLK"/>
    <property type="match status" value="1"/>
</dbReference>
<dbReference type="Pfam" id="PF00069">
    <property type="entry name" value="Pkinase"/>
    <property type="match status" value="1"/>
</dbReference>
<dbReference type="Pfam" id="PF00659">
    <property type="entry name" value="POLO_box"/>
    <property type="match status" value="2"/>
</dbReference>
<dbReference type="SMART" id="SM00220">
    <property type="entry name" value="S_TKc"/>
    <property type="match status" value="1"/>
</dbReference>
<dbReference type="SUPFAM" id="SSF82615">
    <property type="entry name" value="Polo-box domain"/>
    <property type="match status" value="2"/>
</dbReference>
<dbReference type="SUPFAM" id="SSF56112">
    <property type="entry name" value="Protein kinase-like (PK-like)"/>
    <property type="match status" value="1"/>
</dbReference>
<dbReference type="PROSITE" id="PS50078">
    <property type="entry name" value="POLO_BOX"/>
    <property type="match status" value="2"/>
</dbReference>
<dbReference type="PROSITE" id="PS00107">
    <property type="entry name" value="PROTEIN_KINASE_ATP"/>
    <property type="match status" value="1"/>
</dbReference>
<dbReference type="PROSITE" id="PS50011">
    <property type="entry name" value="PROTEIN_KINASE_DOM"/>
    <property type="match status" value="1"/>
</dbReference>
<dbReference type="PROSITE" id="PS00108">
    <property type="entry name" value="PROTEIN_KINASE_ST"/>
    <property type="match status" value="1"/>
</dbReference>
<comment type="function">
    <text evidence="5 6 7 10">Protein kinase required for the cell cycle where it is involved in mitotic exit (PubMed:11371343, PubMed:32099015). A component of the fear (CDC14 early anaphase release) network which promotes CDC14 release from the nucleolus during early anaphase (PubMed:11832211, PubMed:32099015). Phosphorylates SCC1/MCD1 and NET1 (PubMed:12056824).</text>
</comment>
<comment type="catalytic activity">
    <reaction evidence="5 7">
        <text>L-seryl-[protein] + ATP = O-phospho-L-seryl-[protein] + ADP + H(+)</text>
        <dbReference type="Rhea" id="RHEA:17989"/>
        <dbReference type="Rhea" id="RHEA-COMP:9863"/>
        <dbReference type="Rhea" id="RHEA-COMP:11604"/>
        <dbReference type="ChEBI" id="CHEBI:15378"/>
        <dbReference type="ChEBI" id="CHEBI:29999"/>
        <dbReference type="ChEBI" id="CHEBI:30616"/>
        <dbReference type="ChEBI" id="CHEBI:83421"/>
        <dbReference type="ChEBI" id="CHEBI:456216"/>
        <dbReference type="EC" id="2.7.11.21"/>
    </reaction>
</comment>
<comment type="catalytic activity">
    <reaction evidence="5 7">
        <text>L-threonyl-[protein] + ATP = O-phospho-L-threonyl-[protein] + ADP + H(+)</text>
        <dbReference type="Rhea" id="RHEA:46608"/>
        <dbReference type="Rhea" id="RHEA-COMP:11060"/>
        <dbReference type="Rhea" id="RHEA-COMP:11605"/>
        <dbReference type="ChEBI" id="CHEBI:15378"/>
        <dbReference type="ChEBI" id="CHEBI:30013"/>
        <dbReference type="ChEBI" id="CHEBI:30616"/>
        <dbReference type="ChEBI" id="CHEBI:61977"/>
        <dbReference type="ChEBI" id="CHEBI:456216"/>
        <dbReference type="EC" id="2.7.11.21"/>
    </reaction>
</comment>
<comment type="subunit">
    <text evidence="9 11">Interacts with CDC48; the interaction is likely to result in CDC5 degradation (PubMed:14636562). Interacts with CSA1 (PubMed:32553169).</text>
</comment>
<comment type="interaction">
    <interactant intactId="EBI-4440">
        <id>P32562</id>
    </interactant>
    <interactant intactId="EBI-4192">
        <id>Q00684</id>
        <label>CDC14</label>
    </interactant>
    <organismsDiffer>false</organismsDiffer>
    <experiments>2</experiments>
</comment>
<comment type="interaction">
    <interactant intactId="EBI-4440">
        <id>P32562</id>
    </interactant>
    <interactant intactId="EBI-4451">
        <id>P06243</id>
        <label>CDC7</label>
    </interactant>
    <organismsDiffer>false</organismsDiffer>
    <experiments>11</experiments>
</comment>
<comment type="interaction">
    <interactant intactId="EBI-4440">
        <id>P32562</id>
    </interactant>
    <interactant intactId="EBI-6973">
        <id>P41813</id>
        <label>FKH2</label>
    </interactant>
    <organismsDiffer>false</organismsDiffer>
    <experiments>2</experiments>
</comment>
<comment type="interaction">
    <interactant intactId="EBI-4440">
        <id>P32562</id>
    </interactant>
    <interactant intactId="EBI-32189">
        <id>Q04087</id>
        <label>LRS4</label>
    </interactant>
    <organismsDiffer>false</organismsDiffer>
    <experiments>6</experiments>
</comment>
<comment type="interaction">
    <interactant intactId="EBI-4440">
        <id>P32562</id>
    </interactant>
    <interactant intactId="EBI-17843">
        <id>P22216</id>
        <label>RAD53</label>
    </interactant>
    <organismsDiffer>false</organismsDiffer>
    <experiments>3</experiments>
</comment>
<comment type="interaction">
    <interactant intactId="EBI-4440">
        <id>P32562</id>
    </interactant>
    <interactant intactId="EBI-14788">
        <id>P14737</id>
        <label>RAD9</label>
    </interactant>
    <organismsDiffer>false</organismsDiffer>
    <experiments>2</experiments>
</comment>
<comment type="interaction">
    <interactant intactId="EBI-4440">
        <id>P32562</id>
    </interactant>
    <interactant intactId="EBI-17719">
        <id>P23624</id>
        <label>SPO13</label>
    </interactant>
    <organismsDiffer>false</organismsDiffer>
    <experiments>8</experiments>
</comment>
<comment type="interaction">
    <interactant intactId="EBI-4440">
        <id>P32562</id>
    </interactant>
    <interactant intactId="EBI-18607">
        <id>P32944</id>
        <label>SWE1</label>
    </interactant>
    <organismsDiffer>false</organismsDiffer>
    <experiments>4</experiments>
</comment>
<comment type="subcellular location">
    <subcellularLocation>
        <location evidence="11">Cytoplasm</location>
        <location evidence="11">Cytoskeleton</location>
        <location evidence="11">Microtubule organizing center</location>
        <location evidence="11">Spindle pole body</location>
    </subcellularLocation>
    <text evidence="11">Recruited to the spindle pole bodies by CSA1 during metaphase.</text>
</comment>
<comment type="miscellaneous">
    <text evidence="8">Present with 1480 molecules/cell in log phase SD medium.</text>
</comment>
<comment type="similarity">
    <text evidence="2">Belongs to the protein kinase superfamily. Ser/Thr protein kinase family. CDC5/Polo subfamily.</text>
</comment>
<gene>
    <name type="primary">CDC5</name>
    <name type="synonym">MSD2</name>
    <name type="synonym">PKX2</name>
    <name type="ordered locus">YMR001C</name>
    <name type="ORF">YM8270.03C</name>
</gene>
<protein>
    <recommendedName>
        <fullName>Cell cycle serine/threonine-protein kinase CDC5/MSD2</fullName>
        <ecNumber evidence="5 7">2.7.11.21</ecNumber>
    </recommendedName>
</protein>